<sequence>MPRSQNKDNFLDKAFTKMAEGIVKVMPIDSKEKEAYLYYRKGLAAQNDGDYSEALEYYEESLKLEDNQVDRGETLKNMAIIYMSNGDEERALNTYKKALGQNPKQPSCLKNMGLIYEKRGRMAQRNGNQDECDIWFDQAAEVWSKAVRLYPGGYLDIENWLKTTGRGNVDVYL</sequence>
<keyword id="KW-0472">Membrane</keyword>
<keyword id="KW-0602">Photosynthesis</keyword>
<keyword id="KW-0677">Repeat</keyword>
<keyword id="KW-0793">Thylakoid</keyword>
<keyword id="KW-0802">TPR repeat</keyword>
<accession>A2BZV8</accession>
<protein>
    <recommendedName>
        <fullName evidence="1">Photosystem I assembly protein Ycf3</fullName>
    </recommendedName>
</protein>
<name>YCF3_PROM1</name>
<gene>
    <name evidence="1" type="primary">ycf3</name>
    <name type="ordered locus">NATL1_02041</name>
</gene>
<proteinExistence type="inferred from homology"/>
<feature type="chain" id="PRO_1000025966" description="Photosystem I assembly protein Ycf3">
    <location>
        <begin position="1"/>
        <end position="173"/>
    </location>
</feature>
<feature type="repeat" description="TPR 1">
    <location>
        <begin position="35"/>
        <end position="68"/>
    </location>
</feature>
<feature type="repeat" description="TPR 2">
    <location>
        <begin position="72"/>
        <end position="105"/>
    </location>
</feature>
<feature type="repeat" description="TPR 3">
    <location>
        <begin position="120"/>
        <end position="153"/>
    </location>
</feature>
<reference key="1">
    <citation type="journal article" date="2007" name="PLoS Genet.">
        <title>Patterns and implications of gene gain and loss in the evolution of Prochlorococcus.</title>
        <authorList>
            <person name="Kettler G.C."/>
            <person name="Martiny A.C."/>
            <person name="Huang K."/>
            <person name="Zucker J."/>
            <person name="Coleman M.L."/>
            <person name="Rodrigue S."/>
            <person name="Chen F."/>
            <person name="Lapidus A."/>
            <person name="Ferriera S."/>
            <person name="Johnson J."/>
            <person name="Steglich C."/>
            <person name="Church G.M."/>
            <person name="Richardson P."/>
            <person name="Chisholm S.W."/>
        </authorList>
    </citation>
    <scope>NUCLEOTIDE SEQUENCE [LARGE SCALE GENOMIC DNA]</scope>
    <source>
        <strain>NATL1A</strain>
    </source>
</reference>
<organism>
    <name type="scientific">Prochlorococcus marinus (strain NATL1A)</name>
    <dbReference type="NCBI Taxonomy" id="167555"/>
    <lineage>
        <taxon>Bacteria</taxon>
        <taxon>Bacillati</taxon>
        <taxon>Cyanobacteriota</taxon>
        <taxon>Cyanophyceae</taxon>
        <taxon>Synechococcales</taxon>
        <taxon>Prochlorococcaceae</taxon>
        <taxon>Prochlorococcus</taxon>
    </lineage>
</organism>
<comment type="function">
    <text evidence="1">Essential for the assembly of the photosystem I (PSI) complex. May act as a chaperone-like factor to guide the assembly of the PSI subunits.</text>
</comment>
<comment type="subcellular location">
    <subcellularLocation>
        <location evidence="1">Cellular thylakoid membrane</location>
        <topology evidence="1">Peripheral membrane protein</topology>
    </subcellularLocation>
</comment>
<comment type="similarity">
    <text evidence="1">Belongs to the Ycf3 family.</text>
</comment>
<dbReference type="EMBL" id="CP000553">
    <property type="protein sequence ID" value="ABM74768.1"/>
    <property type="molecule type" value="Genomic_DNA"/>
</dbReference>
<dbReference type="RefSeq" id="WP_011822992.1">
    <property type="nucleotide sequence ID" value="NC_008819.1"/>
</dbReference>
<dbReference type="SMR" id="A2BZV8"/>
<dbReference type="KEGG" id="pme:NATL1_02041"/>
<dbReference type="eggNOG" id="COG3063">
    <property type="taxonomic scope" value="Bacteria"/>
</dbReference>
<dbReference type="HOGENOM" id="CLU_141248_0_0_3"/>
<dbReference type="Proteomes" id="UP000002592">
    <property type="component" value="Chromosome"/>
</dbReference>
<dbReference type="GO" id="GO:0031676">
    <property type="term" value="C:plasma membrane-derived thylakoid membrane"/>
    <property type="evidence" value="ECO:0007669"/>
    <property type="project" value="UniProtKB-SubCell"/>
</dbReference>
<dbReference type="GO" id="GO:0015979">
    <property type="term" value="P:photosynthesis"/>
    <property type="evidence" value="ECO:0007669"/>
    <property type="project" value="UniProtKB-UniRule"/>
</dbReference>
<dbReference type="Gene3D" id="1.25.40.10">
    <property type="entry name" value="Tetratricopeptide repeat domain"/>
    <property type="match status" value="1"/>
</dbReference>
<dbReference type="HAMAP" id="MF_00439">
    <property type="entry name" value="Ycf3"/>
    <property type="match status" value="1"/>
</dbReference>
<dbReference type="InterPro" id="IPR022818">
    <property type="entry name" value="PSI_Ycf3_assembly"/>
</dbReference>
<dbReference type="InterPro" id="IPR011990">
    <property type="entry name" value="TPR-like_helical_dom_sf"/>
</dbReference>
<dbReference type="InterPro" id="IPR019734">
    <property type="entry name" value="TPR_rpt"/>
</dbReference>
<dbReference type="InterPro" id="IPR051685">
    <property type="entry name" value="Ycf3/AcsC/BcsC/TPR_MFPF"/>
</dbReference>
<dbReference type="NCBIfam" id="NF002725">
    <property type="entry name" value="PRK02603.1"/>
    <property type="match status" value="1"/>
</dbReference>
<dbReference type="PANTHER" id="PTHR44943">
    <property type="entry name" value="CELLULOSE SYNTHASE OPERON PROTEIN C"/>
    <property type="match status" value="1"/>
</dbReference>
<dbReference type="PANTHER" id="PTHR44943:SF8">
    <property type="entry name" value="TPR REPEAT-CONTAINING PROTEIN MJ0263"/>
    <property type="match status" value="1"/>
</dbReference>
<dbReference type="Pfam" id="PF13424">
    <property type="entry name" value="TPR_12"/>
    <property type="match status" value="1"/>
</dbReference>
<dbReference type="SMART" id="SM00028">
    <property type="entry name" value="TPR"/>
    <property type="match status" value="3"/>
</dbReference>
<dbReference type="SUPFAM" id="SSF48452">
    <property type="entry name" value="TPR-like"/>
    <property type="match status" value="1"/>
</dbReference>
<dbReference type="PROSITE" id="PS50005">
    <property type="entry name" value="TPR"/>
    <property type="match status" value="2"/>
</dbReference>
<dbReference type="PROSITE" id="PS50293">
    <property type="entry name" value="TPR_REGION"/>
    <property type="match status" value="1"/>
</dbReference>
<evidence type="ECO:0000255" key="1">
    <source>
        <dbReference type="HAMAP-Rule" id="MF_00439"/>
    </source>
</evidence>